<evidence type="ECO:0000250" key="1">
    <source>
        <dbReference type="UniProtKB" id="P24941"/>
    </source>
</evidence>
<evidence type="ECO:0000255" key="2">
    <source>
        <dbReference type="PROSITE-ProRule" id="PRU00159"/>
    </source>
</evidence>
<evidence type="ECO:0000269" key="3">
    <source>
    </source>
</evidence>
<evidence type="ECO:0000269" key="4">
    <source>
    </source>
</evidence>
<evidence type="ECO:0000269" key="5">
    <source>
    </source>
</evidence>
<evidence type="ECO:0000269" key="6">
    <source>
    </source>
</evidence>
<evidence type="ECO:0000303" key="7">
    <source>
    </source>
</evidence>
<evidence type="ECO:0000305" key="8"/>
<evidence type="ECO:0000312" key="9">
    <source>
        <dbReference type="EMBL" id="AAD48898.1"/>
    </source>
</evidence>
<evidence type="ECO:0000312" key="10">
    <source>
        <dbReference type="Proteomes" id="UP000001940"/>
    </source>
</evidence>
<evidence type="ECO:0000312" key="11">
    <source>
        <dbReference type="WormBase" id="F18H3.5a"/>
    </source>
</evidence>
<evidence type="ECO:0000312" key="12">
    <source>
        <dbReference type="WormBase" id="F18H3.5b"/>
    </source>
</evidence>
<proteinExistence type="evidence at protein level"/>
<dbReference type="EC" id="2.7.11.22" evidence="6"/>
<dbReference type="EMBL" id="AF083878">
    <property type="protein sequence ID" value="AAD48898.1"/>
    <property type="molecule type" value="mRNA"/>
</dbReference>
<dbReference type="EMBL" id="BX284606">
    <property type="protein sequence ID" value="CAA90447.1"/>
    <property type="molecule type" value="Genomic_DNA"/>
</dbReference>
<dbReference type="EMBL" id="Z99773">
    <property type="protein sequence ID" value="CAA90447.1"/>
    <property type="status" value="JOINED"/>
    <property type="molecule type" value="Genomic_DNA"/>
</dbReference>
<dbReference type="EMBL" id="BX284606">
    <property type="protein sequence ID" value="CAB16923.2"/>
    <property type="molecule type" value="Genomic_DNA"/>
</dbReference>
<dbReference type="PIR" id="T21098">
    <property type="entry name" value="T21098"/>
</dbReference>
<dbReference type="PIR" id="T23050">
    <property type="entry name" value="T23050"/>
</dbReference>
<dbReference type="RefSeq" id="NP_001024591.1">
    <property type="nucleotide sequence ID" value="NM_001029420.1"/>
</dbReference>
<dbReference type="RefSeq" id="NP_510256.1">
    <molecule id="Q9XTR1-2"/>
    <property type="nucleotide sequence ID" value="NM_077855.8"/>
</dbReference>
<dbReference type="SMR" id="Q9XTR1"/>
<dbReference type="ComplexPortal" id="CPX-1126">
    <property type="entry name" value="Cyclin cyd-1-cdk4 complex"/>
</dbReference>
<dbReference type="FunCoup" id="Q9XTR1">
    <property type="interactions" value="31"/>
</dbReference>
<dbReference type="IntAct" id="Q9XTR1">
    <property type="interactions" value="1"/>
</dbReference>
<dbReference type="STRING" id="6239.F18H3.5b.1"/>
<dbReference type="PaxDb" id="6239-F18H3.5b"/>
<dbReference type="PeptideAtlas" id="Q9XTR1"/>
<dbReference type="EnsemblMetazoa" id="F18H3.5.1">
    <molecule id="Q9XTR1-2"/>
    <property type="protein sequence ID" value="F18H3.5.1"/>
    <property type="gene ID" value="WBGene00000406"/>
</dbReference>
<dbReference type="GeneID" id="181472"/>
<dbReference type="KEGG" id="cel:CELE_F18H3.5"/>
<dbReference type="AGR" id="WB:WBGene00000406"/>
<dbReference type="CTD" id="181472"/>
<dbReference type="WormBase" id="F18H3.5a">
    <molecule id="Q9XTR1-2"/>
    <property type="protein sequence ID" value="CE18608"/>
    <property type="gene ID" value="WBGene00000406"/>
    <property type="gene designation" value="cdk-4"/>
</dbReference>
<dbReference type="WormBase" id="F18H3.5b">
    <molecule id="Q9XTR1-1"/>
    <property type="protein sequence ID" value="CE28918"/>
    <property type="gene ID" value="WBGene00000406"/>
    <property type="gene designation" value="cdk-4"/>
</dbReference>
<dbReference type="eggNOG" id="KOG0594">
    <property type="taxonomic scope" value="Eukaryota"/>
</dbReference>
<dbReference type="GeneTree" id="ENSGT00940000167918"/>
<dbReference type="InParanoid" id="Q9XTR1"/>
<dbReference type="OMA" id="YEEHRVI"/>
<dbReference type="OrthoDB" id="1732493at2759"/>
<dbReference type="PhylomeDB" id="Q9XTR1"/>
<dbReference type="PRO" id="PR:Q9XTR1"/>
<dbReference type="Proteomes" id="UP000001940">
    <property type="component" value="Chromosome X"/>
</dbReference>
<dbReference type="Bgee" id="WBGene00000406">
    <property type="expression patterns" value="Expressed in embryo and 4 other cell types or tissues"/>
</dbReference>
<dbReference type="GO" id="GO:0097128">
    <property type="term" value="C:cyclin D1-CDK4 complex"/>
    <property type="evidence" value="ECO:0000353"/>
    <property type="project" value="ComplexPortal"/>
</dbReference>
<dbReference type="GO" id="GO:0000307">
    <property type="term" value="C:cyclin-dependent protein kinase holoenzyme complex"/>
    <property type="evidence" value="ECO:0000318"/>
    <property type="project" value="GO_Central"/>
</dbReference>
<dbReference type="GO" id="GO:0005737">
    <property type="term" value="C:cytoplasm"/>
    <property type="evidence" value="ECO:0000318"/>
    <property type="project" value="GO_Central"/>
</dbReference>
<dbReference type="GO" id="GO:0005634">
    <property type="term" value="C:nucleus"/>
    <property type="evidence" value="ECO:0000318"/>
    <property type="project" value="GO_Central"/>
</dbReference>
<dbReference type="GO" id="GO:0005524">
    <property type="term" value="F:ATP binding"/>
    <property type="evidence" value="ECO:0007669"/>
    <property type="project" value="UniProtKB-KW"/>
</dbReference>
<dbReference type="GO" id="GO:0030332">
    <property type="term" value="F:cyclin binding"/>
    <property type="evidence" value="ECO:0000318"/>
    <property type="project" value="GO_Central"/>
</dbReference>
<dbReference type="GO" id="GO:0004693">
    <property type="term" value="F:cyclin-dependent protein serine/threonine kinase activity"/>
    <property type="evidence" value="ECO:0000318"/>
    <property type="project" value="GO_Central"/>
</dbReference>
<dbReference type="GO" id="GO:0046872">
    <property type="term" value="F:metal ion binding"/>
    <property type="evidence" value="ECO:0007669"/>
    <property type="project" value="UniProtKB-KW"/>
</dbReference>
<dbReference type="GO" id="GO:0106310">
    <property type="term" value="F:protein serine kinase activity"/>
    <property type="evidence" value="ECO:0007669"/>
    <property type="project" value="RHEA"/>
</dbReference>
<dbReference type="GO" id="GO:0004674">
    <property type="term" value="F:protein serine/threonine kinase activity"/>
    <property type="evidence" value="ECO:0000314"/>
    <property type="project" value="WormBase"/>
</dbReference>
<dbReference type="GO" id="GO:0044843">
    <property type="term" value="P:cell cycle G1/S phase transition"/>
    <property type="evidence" value="ECO:0000304"/>
    <property type="project" value="UniProtKB"/>
</dbReference>
<dbReference type="GO" id="GO:0051301">
    <property type="term" value="P:cell division"/>
    <property type="evidence" value="ECO:0007669"/>
    <property type="project" value="UniProtKB-KW"/>
</dbReference>
<dbReference type="GO" id="GO:0000082">
    <property type="term" value="P:G1/S transition of mitotic cell cycle"/>
    <property type="evidence" value="ECO:0000315"/>
    <property type="project" value="ComplexPortal"/>
</dbReference>
<dbReference type="GO" id="GO:0008584">
    <property type="term" value="P:male gonad development"/>
    <property type="evidence" value="ECO:0000316"/>
    <property type="project" value="UniProtKB"/>
</dbReference>
<dbReference type="GO" id="GO:0002119">
    <property type="term" value="P:nematode larval development"/>
    <property type="evidence" value="ECO:0000315"/>
    <property type="project" value="UniProtKB"/>
</dbReference>
<dbReference type="GO" id="GO:0090727">
    <property type="term" value="P:positive regulation of brood size"/>
    <property type="evidence" value="ECO:0000315"/>
    <property type="project" value="UniProtKB"/>
</dbReference>
<dbReference type="GO" id="GO:0032877">
    <property type="term" value="P:positive regulation of DNA endoreduplication"/>
    <property type="evidence" value="ECO:0000315"/>
    <property type="project" value="UniProtKB"/>
</dbReference>
<dbReference type="GO" id="GO:1900087">
    <property type="term" value="P:positive regulation of G1/S transition of mitotic cell cycle"/>
    <property type="evidence" value="ECO:0000315"/>
    <property type="project" value="WormBase"/>
</dbReference>
<dbReference type="GO" id="GO:0009791">
    <property type="term" value="P:post-embryonic development"/>
    <property type="evidence" value="ECO:0000315"/>
    <property type="project" value="WormBase"/>
</dbReference>
<dbReference type="GO" id="GO:0010389">
    <property type="term" value="P:regulation of G2/M transition of mitotic cell cycle"/>
    <property type="evidence" value="ECO:0000318"/>
    <property type="project" value="GO_Central"/>
</dbReference>
<dbReference type="GO" id="GO:0010468">
    <property type="term" value="P:regulation of gene expression"/>
    <property type="evidence" value="ECO:0000318"/>
    <property type="project" value="GO_Central"/>
</dbReference>
<dbReference type="GO" id="GO:0007530">
    <property type="term" value="P:sex determination"/>
    <property type="evidence" value="ECO:0000316"/>
    <property type="project" value="UniProtKB"/>
</dbReference>
<dbReference type="GO" id="GO:0007165">
    <property type="term" value="P:signal transduction"/>
    <property type="evidence" value="ECO:0000318"/>
    <property type="project" value="GO_Central"/>
</dbReference>
<dbReference type="FunFam" id="1.10.510.10:FF:001548">
    <property type="entry name" value="Cyclin-dependent kinase 4 homolog"/>
    <property type="match status" value="1"/>
</dbReference>
<dbReference type="Gene3D" id="3.30.200.20">
    <property type="entry name" value="Phosphorylase Kinase, domain 1"/>
    <property type="match status" value="1"/>
</dbReference>
<dbReference type="Gene3D" id="1.10.510.10">
    <property type="entry name" value="Transferase(Phosphotransferase) domain 1"/>
    <property type="match status" value="1"/>
</dbReference>
<dbReference type="InterPro" id="IPR050108">
    <property type="entry name" value="CDK"/>
</dbReference>
<dbReference type="InterPro" id="IPR011009">
    <property type="entry name" value="Kinase-like_dom_sf"/>
</dbReference>
<dbReference type="InterPro" id="IPR000719">
    <property type="entry name" value="Prot_kinase_dom"/>
</dbReference>
<dbReference type="InterPro" id="IPR017441">
    <property type="entry name" value="Protein_kinase_ATP_BS"/>
</dbReference>
<dbReference type="InterPro" id="IPR008271">
    <property type="entry name" value="Ser/Thr_kinase_AS"/>
</dbReference>
<dbReference type="PANTHER" id="PTHR24056">
    <property type="entry name" value="CELL DIVISION PROTEIN KINASE"/>
    <property type="match status" value="1"/>
</dbReference>
<dbReference type="PANTHER" id="PTHR24056:SF472">
    <property type="entry name" value="CYCLIN-DEPENDENT KINASE 4, ISOFORM A"/>
    <property type="match status" value="1"/>
</dbReference>
<dbReference type="Pfam" id="PF00069">
    <property type="entry name" value="Pkinase"/>
    <property type="match status" value="1"/>
</dbReference>
<dbReference type="SMART" id="SM00220">
    <property type="entry name" value="S_TKc"/>
    <property type="match status" value="1"/>
</dbReference>
<dbReference type="SUPFAM" id="SSF56112">
    <property type="entry name" value="Protein kinase-like (PK-like)"/>
    <property type="match status" value="1"/>
</dbReference>
<dbReference type="PROSITE" id="PS00107">
    <property type="entry name" value="PROTEIN_KINASE_ATP"/>
    <property type="match status" value="1"/>
</dbReference>
<dbReference type="PROSITE" id="PS50011">
    <property type="entry name" value="PROTEIN_KINASE_DOM"/>
    <property type="match status" value="1"/>
</dbReference>
<dbReference type="PROSITE" id="PS00108">
    <property type="entry name" value="PROTEIN_KINASE_ST"/>
    <property type="match status" value="1"/>
</dbReference>
<protein>
    <recommendedName>
        <fullName evidence="8">Cyclin-dependent kinase 4 homolog</fullName>
        <shortName evidence="7">CDK4/6</shortName>
        <ecNumber evidence="6">2.7.11.22</ecNumber>
    </recommendedName>
    <alternativeName>
        <fullName evidence="8">Cell division protein kinase 4</fullName>
    </alternativeName>
</protein>
<name>CDK4_CAEEL</name>
<sequence length="406" mass="46694">MTIRHILAIRKKSLELPSDLKTFLRVLANCQHLKKNKKCRRTIFSVDFQNNQRQKPSNFHFWTVIKKFSKKILKSFIIKFGNNGTIAVVFSIFPTGATPSLTFLFQALGKGAYGNVYRVRSLHDGKDYALKQIMISSKNEGIPQSVLREITVMKHLARKAHPNIISLKSVFHQLDPVRAILKINMIMERCDWDLHTFLRNIPRGVPEQQAKHVTAQIVRALDFLHTHSIIHRDLKPQNILLNRDQTVKLADFGLSKEYSNTTAFTTLVVTLWYRSPEVLLQSYYNSTVDMWALGCIVSEIYCRQPLFVGQNEAEQLTDIFKKMGTPVGKDWPSESVIARDSFPQYRPTNLKDLSPQMSKQAIEFVQQCLRYDHSKRLSARGALSHPFLKPAVATKSRVLKQINFNK</sequence>
<organism evidence="10">
    <name type="scientific">Caenorhabditis elegans</name>
    <dbReference type="NCBI Taxonomy" id="6239"/>
    <lineage>
        <taxon>Eukaryota</taxon>
        <taxon>Metazoa</taxon>
        <taxon>Ecdysozoa</taxon>
        <taxon>Nematoda</taxon>
        <taxon>Chromadorea</taxon>
        <taxon>Rhabditida</taxon>
        <taxon>Rhabditina</taxon>
        <taxon>Rhabditomorpha</taxon>
        <taxon>Rhabditoidea</taxon>
        <taxon>Rhabditidae</taxon>
        <taxon>Peloderinae</taxon>
        <taxon>Caenorhabditis</taxon>
    </lineage>
</organism>
<accession>Q9XTR1</accession>
<accession>G5EFI3</accession>
<feature type="chain" id="PRO_0000433388" description="Cyclin-dependent kinase 4 homolog" evidence="8">
    <location>
        <begin position="1"/>
        <end position="406"/>
    </location>
</feature>
<feature type="domain" description="Protein kinase" evidence="2">
    <location>
        <begin position="102"/>
        <end position="388"/>
    </location>
</feature>
<feature type="active site" description="Proton acceptor" evidence="2">
    <location>
        <position position="233"/>
    </location>
</feature>
<feature type="binding site" evidence="2">
    <location>
        <begin position="108"/>
        <end position="116"/>
    </location>
    <ligand>
        <name>ATP</name>
        <dbReference type="ChEBI" id="CHEBI:30616"/>
    </ligand>
</feature>
<feature type="binding site" evidence="2">
    <location>
        <position position="131"/>
    </location>
    <ligand>
        <name>ATP</name>
        <dbReference type="ChEBI" id="CHEBI:30616"/>
    </ligand>
</feature>
<feature type="binding site" evidence="1">
    <location>
        <position position="238"/>
    </location>
    <ligand>
        <name>Mg(2+)</name>
        <dbReference type="ChEBI" id="CHEBI:18420"/>
    </ligand>
</feature>
<feature type="binding site" evidence="1">
    <location>
        <position position="251"/>
    </location>
    <ligand>
        <name>Mg(2+)</name>
        <dbReference type="ChEBI" id="CHEBI:18420"/>
    </ligand>
</feature>
<feature type="splice variant" id="VSP_057762" description="In isoform a." evidence="8">
    <original>MTIRHILAIRKKSLELPSDLKTFLRVLANCQHLKKNKKCRRTIFSVDFQNNQRQKPSNFHFWTVIKKFSKKILKSFIIKFGNNGTIAVVFSIFPTGATPSLTFLF</original>
    <variation>MCENLYGEEYKMEILRLQKMMNNMTCGQMAKPLTMKDFQIH</variation>
    <location>
        <begin position="1"/>
        <end position="105"/>
    </location>
</feature>
<feature type="mutagenesis site" description="In he110; lack of postembryonic blast cell division." evidence="4">
    <original>E</original>
    <variation>K</variation>
    <location>
        <position position="149"/>
    </location>
</feature>
<feature type="mutagenesis site" description="Loss of activity. Arrest at an early larval stage associated with a lack of cell division in several postembryonic blast cells." evidence="6">
    <original>D</original>
    <variation>N</variation>
    <location>
        <position position="191"/>
    </location>
</feature>
<comment type="function">
    <text evidence="3 4 5 6">Serine/threonine-protein kinase which, in association with cyclin D-like protein cyd-1, is required for the progression through the G1 phase of the cell cycle during postembryonic development by phosphorylating and inhibiting lin-35 and fzr-1 (PubMed:10518501, PubMed:11684669, PubMed:25562820). In complex with cyd-1, involved in sex determination during gonadogenesis by regulating the asymmetric division of the somatic gonadal precursor cell (SGP) (PubMed:16198291).</text>
</comment>
<comment type="catalytic activity">
    <reaction evidence="6">
        <text>L-seryl-[protein] + ATP = O-phospho-L-seryl-[protein] + ADP + H(+)</text>
        <dbReference type="Rhea" id="RHEA:17989"/>
        <dbReference type="Rhea" id="RHEA-COMP:9863"/>
        <dbReference type="Rhea" id="RHEA-COMP:11604"/>
        <dbReference type="ChEBI" id="CHEBI:15378"/>
        <dbReference type="ChEBI" id="CHEBI:29999"/>
        <dbReference type="ChEBI" id="CHEBI:30616"/>
        <dbReference type="ChEBI" id="CHEBI:83421"/>
        <dbReference type="ChEBI" id="CHEBI:456216"/>
        <dbReference type="EC" id="2.7.11.22"/>
    </reaction>
</comment>
<comment type="catalytic activity">
    <reaction evidence="6">
        <text>L-threonyl-[protein] + ATP = O-phospho-L-threonyl-[protein] + ADP + H(+)</text>
        <dbReference type="Rhea" id="RHEA:46608"/>
        <dbReference type="Rhea" id="RHEA-COMP:11060"/>
        <dbReference type="Rhea" id="RHEA-COMP:11605"/>
        <dbReference type="ChEBI" id="CHEBI:15378"/>
        <dbReference type="ChEBI" id="CHEBI:30013"/>
        <dbReference type="ChEBI" id="CHEBI:30616"/>
        <dbReference type="ChEBI" id="CHEBI:61977"/>
        <dbReference type="ChEBI" id="CHEBI:456216"/>
        <dbReference type="EC" id="2.7.11.22"/>
    </reaction>
</comment>
<comment type="cofactor">
    <cofactor evidence="1">
        <name>Mg(2+)</name>
        <dbReference type="ChEBI" id="CHEBI:18420"/>
    </cofactor>
</comment>
<comment type="subunit">
    <text evidence="3">Interacts with cyd-1; the interaction is likely involved in regulating cdk-4 activity.</text>
</comment>
<comment type="interaction">
    <interactant intactId="EBI-14063019">
        <id>Q9XTR1</id>
    </interactant>
    <interactant intactId="EBI-2420074">
        <id>Q9U2M5</id>
        <label>cyd-1</label>
    </interactant>
    <organismsDiffer>false</organismsDiffer>
    <experiments>2</experiments>
</comment>
<comment type="alternative products">
    <event type="alternative splicing"/>
    <isoform>
        <id>Q9XTR1-1</id>
        <name evidence="12">b</name>
        <sequence type="displayed"/>
    </isoform>
    <isoform>
        <id>Q9XTR1-2</id>
        <name evidence="11">a</name>
        <sequence type="described" ref="VSP_057762"/>
    </isoform>
</comment>
<comment type="developmental stage">
    <text evidence="3">Expression initiates during mid-embryogenesis primarily in post-proliferative hypodermal cells and neurons in the head, ventral cord and tail, then declines until hatching where it is mainly seen in seam cells. Expressed throughout larval development in several blast cell linages. In the P lineage, expression is restricted to proliferating cells, whereas it persists in somatic gonads and seam cells. Expressed in uterus and intestine and to a lesser extent in spermatheca.</text>
</comment>
<comment type="disruption phenotype">
    <text evidence="3 4 6">Arrested cell division in the G1 phase during larval development (PubMed:25562820). RNAi-mediated knockdown results in L4 stage arrest which is associated with uncoordinated movements and a protruding vulva (PubMed:10518501). Impaired cell division of P blast cells, somatic gonad precursors Z1 and Z4 and intestinal cells (PubMed:10518501). Severe defect in the proliferation of P blast cells, intestinal cells, vulva cell precursors and somatic gonad precursors (PubMed:10518501). Mesoblast M cell division is normal (PubMed:10518501). Double knockout with lin-35 rescues the cell cycle progression defect in the single cdk-4 mutants (PubMed:11684669, PubMed:25562820).</text>
</comment>
<comment type="similarity">
    <text evidence="8">Belongs to the protein kinase superfamily. CMGC Ser/Thr protein kinase family. CDC2/CDKX subfamily.</text>
</comment>
<keyword id="KW-0025">Alternative splicing</keyword>
<keyword id="KW-0067">ATP-binding</keyword>
<keyword id="KW-0131">Cell cycle</keyword>
<keyword id="KW-0132">Cell division</keyword>
<keyword id="KW-0418">Kinase</keyword>
<keyword id="KW-0460">Magnesium</keyword>
<keyword id="KW-0479">Metal-binding</keyword>
<keyword id="KW-0547">Nucleotide-binding</keyword>
<keyword id="KW-1185">Reference proteome</keyword>
<keyword id="KW-0723">Serine/threonine-protein kinase</keyword>
<keyword id="KW-0808">Transferase</keyword>
<gene>
    <name evidence="12" type="primary">cdk-4</name>
    <name evidence="12" type="ORF">F18H3.5</name>
</gene>
<reference evidence="9" key="1">
    <citation type="journal article" date="1999" name="Development">
        <title>Regulation of postembryonic G(1) cell cycle progression in Caenorhabditis elegans by a cyclin D/CDK-like complex.</title>
        <authorList>
            <person name="Park M."/>
            <person name="Krause M.W."/>
        </authorList>
    </citation>
    <scope>NUCLEOTIDE SEQUENCE [MRNA] (ISOFORM A)</scope>
    <scope>FUNCTION</scope>
    <scope>INTERACTION WITH CYD-1</scope>
    <scope>DEVELOPMENTAL STAGE</scope>
    <scope>DISRUPTION PHENOTYPE</scope>
</reference>
<reference evidence="10" key="2">
    <citation type="journal article" date="1998" name="Science">
        <title>Genome sequence of the nematode C. elegans: a platform for investigating biology.</title>
        <authorList>
            <consortium name="The C. elegans sequencing consortium"/>
        </authorList>
    </citation>
    <scope>NUCLEOTIDE SEQUENCE [LARGE SCALE GENOMIC DNA]</scope>
    <source>
        <strain evidence="10">Bristol N2</strain>
    </source>
</reference>
<reference evidence="8" key="3">
    <citation type="journal article" date="2001" name="Development">
        <title>lin-35 Rb and cki-1 Cip/Kip cooperate in developmental regulation of G1 progression in C. elegans.</title>
        <authorList>
            <person name="Boxem M."/>
            <person name="van den Heuvel S."/>
        </authorList>
    </citation>
    <scope>FUNCTION</scope>
    <scope>DISRUPTION PHENOTYPE</scope>
    <scope>MUTAGENESIS OF GLU-149</scope>
</reference>
<reference evidence="8" key="4">
    <citation type="journal article" date="2005" name="Dev. Cell">
        <title>Cyclin D regulation of a sexually dimorphic asymmetric cell division.</title>
        <authorList>
            <person name="Tilmann C."/>
            <person name="Kimble J."/>
        </authorList>
    </citation>
    <scope>FUNCTION</scope>
</reference>
<reference evidence="8" key="5">
    <citation type="journal article" date="2015" name="Nat. Commun.">
        <title>Rb and FZR1/Cdh1 determine CDK4/6-cyclin D requirement in C. elegans and human cancer cells.</title>
        <authorList>
            <person name="The I."/>
            <person name="Ruijtenberg S."/>
            <person name="Bouchet B.P."/>
            <person name="Cristobal A."/>
            <person name="Prinsen M.B."/>
            <person name="van Mourik T."/>
            <person name="Koreth J."/>
            <person name="Xu H."/>
            <person name="Heck A.J."/>
            <person name="Akhmanova A."/>
            <person name="Cuppen E."/>
            <person name="Boxem M."/>
            <person name="Munoz J."/>
            <person name="van den Heuvel S."/>
        </authorList>
    </citation>
    <scope>FUNCTION</scope>
    <scope>CATALYTIC ACTIVITY</scope>
    <scope>DISRUPTION PHENOTYPE</scope>
    <scope>MUTAGENESIS OF ASP-191</scope>
</reference>